<evidence type="ECO:0000255" key="1">
    <source>
        <dbReference type="HAMAP-Rule" id="MF_00351"/>
    </source>
</evidence>
<protein>
    <recommendedName>
        <fullName evidence="1">Fibrillarin-like rRNA/tRNA 2'-O-methyltransferase</fullName>
        <ecNumber evidence="1">2.1.1.-</ecNumber>
    </recommendedName>
</protein>
<accession>Q8TTT4</accession>
<organism>
    <name type="scientific">Methanosarcina acetivorans (strain ATCC 35395 / DSM 2834 / JCM 12185 / C2A)</name>
    <dbReference type="NCBI Taxonomy" id="188937"/>
    <lineage>
        <taxon>Archaea</taxon>
        <taxon>Methanobacteriati</taxon>
        <taxon>Methanobacteriota</taxon>
        <taxon>Stenosarchaea group</taxon>
        <taxon>Methanomicrobia</taxon>
        <taxon>Methanosarcinales</taxon>
        <taxon>Methanosarcinaceae</taxon>
        <taxon>Methanosarcina</taxon>
    </lineage>
</organism>
<keyword id="KW-0489">Methyltransferase</keyword>
<keyword id="KW-1185">Reference proteome</keyword>
<keyword id="KW-0694">RNA-binding</keyword>
<keyword id="KW-0698">rRNA processing</keyword>
<keyword id="KW-0808">Transferase</keyword>
<keyword id="KW-0819">tRNA processing</keyword>
<comment type="function">
    <text evidence="1">Involved in pre-rRNA and tRNA processing. Utilizes the methyl donor S-adenosyl-L-methionine to catalyze the site-specific 2'-hydroxyl methylation of ribose moieties in rRNA and tRNA. Site specificity is provided by a guide RNA that base pairs with the substrate. Methylation occurs at a characteristic distance from the sequence involved in base pairing with the guide RNA.</text>
</comment>
<comment type="subunit">
    <text evidence="1">Interacts with nop5. Component of box C/D small ribonucleoprotein (sRNP) particles that contain rpl7ae, FlpA and nop5, plus a guide RNA.</text>
</comment>
<comment type="similarity">
    <text evidence="1">Belongs to the methyltransferase superfamily. Fibrillarin family.</text>
</comment>
<dbReference type="EC" id="2.1.1.-" evidence="1"/>
<dbReference type="EMBL" id="AE010299">
    <property type="protein sequence ID" value="AAM03794.1"/>
    <property type="molecule type" value="Genomic_DNA"/>
</dbReference>
<dbReference type="RefSeq" id="WP_011020399.1">
    <property type="nucleotide sequence ID" value="NC_003552.1"/>
</dbReference>
<dbReference type="SMR" id="Q8TTT4"/>
<dbReference type="FunCoup" id="Q8TTT4">
    <property type="interactions" value="131"/>
</dbReference>
<dbReference type="STRING" id="188937.MA_0341"/>
<dbReference type="EnsemblBacteria" id="AAM03794">
    <property type="protein sequence ID" value="AAM03794"/>
    <property type="gene ID" value="MA_0341"/>
</dbReference>
<dbReference type="GeneID" id="1472233"/>
<dbReference type="KEGG" id="mac:MA_0341"/>
<dbReference type="HOGENOM" id="CLU_059055_2_0_2"/>
<dbReference type="InParanoid" id="Q8TTT4"/>
<dbReference type="OrthoDB" id="6244at2157"/>
<dbReference type="PhylomeDB" id="Q8TTT4"/>
<dbReference type="Proteomes" id="UP000002487">
    <property type="component" value="Chromosome"/>
</dbReference>
<dbReference type="GO" id="GO:1990259">
    <property type="term" value="F:histone H2AQ104 methyltransferase activity"/>
    <property type="evidence" value="ECO:0000318"/>
    <property type="project" value="GO_Central"/>
</dbReference>
<dbReference type="GO" id="GO:0003723">
    <property type="term" value="F:RNA binding"/>
    <property type="evidence" value="ECO:0000318"/>
    <property type="project" value="GO_Central"/>
</dbReference>
<dbReference type="GO" id="GO:0008649">
    <property type="term" value="F:rRNA methyltransferase activity"/>
    <property type="evidence" value="ECO:0000318"/>
    <property type="project" value="GO_Central"/>
</dbReference>
<dbReference type="GO" id="GO:0000494">
    <property type="term" value="P:box C/D sno(s)RNA 3'-end processing"/>
    <property type="evidence" value="ECO:0000318"/>
    <property type="project" value="GO_Central"/>
</dbReference>
<dbReference type="GO" id="GO:0031167">
    <property type="term" value="P:rRNA methylation"/>
    <property type="evidence" value="ECO:0000318"/>
    <property type="project" value="GO_Central"/>
</dbReference>
<dbReference type="GO" id="GO:0008033">
    <property type="term" value="P:tRNA processing"/>
    <property type="evidence" value="ECO:0007669"/>
    <property type="project" value="UniProtKB-UniRule"/>
</dbReference>
<dbReference type="FunFam" id="3.40.50.150:FF:000343">
    <property type="entry name" value="Fibrillarin-like rRNA/tRNA 2'-O-methyltransferase"/>
    <property type="match status" value="1"/>
</dbReference>
<dbReference type="Gene3D" id="3.30.200.20">
    <property type="entry name" value="Phosphorylase Kinase, domain 1"/>
    <property type="match status" value="1"/>
</dbReference>
<dbReference type="Gene3D" id="3.40.50.150">
    <property type="entry name" value="Vaccinia Virus protein VP39"/>
    <property type="match status" value="1"/>
</dbReference>
<dbReference type="HAMAP" id="MF_00351">
    <property type="entry name" value="RNA_methyltransf_FlpA"/>
    <property type="match status" value="1"/>
</dbReference>
<dbReference type="InterPro" id="IPR000692">
    <property type="entry name" value="Fibrillarin"/>
</dbReference>
<dbReference type="InterPro" id="IPR020813">
    <property type="entry name" value="Fibrillarin_CS"/>
</dbReference>
<dbReference type="InterPro" id="IPR029063">
    <property type="entry name" value="SAM-dependent_MTases_sf"/>
</dbReference>
<dbReference type="NCBIfam" id="NF003276">
    <property type="entry name" value="PRK04266.1-2"/>
    <property type="match status" value="1"/>
</dbReference>
<dbReference type="NCBIfam" id="NF003278">
    <property type="entry name" value="PRK04266.1-4"/>
    <property type="match status" value="1"/>
</dbReference>
<dbReference type="PANTHER" id="PTHR10335:SF17">
    <property type="entry name" value="FIBRILLARIN"/>
    <property type="match status" value="1"/>
</dbReference>
<dbReference type="PANTHER" id="PTHR10335">
    <property type="entry name" value="RRNA 2-O-METHYLTRANSFERASE FIBRILLARIN"/>
    <property type="match status" value="1"/>
</dbReference>
<dbReference type="Pfam" id="PF01269">
    <property type="entry name" value="Fibrillarin"/>
    <property type="match status" value="1"/>
</dbReference>
<dbReference type="PIRSF" id="PIRSF006540">
    <property type="entry name" value="Nop17p"/>
    <property type="match status" value="1"/>
</dbReference>
<dbReference type="PRINTS" id="PR00052">
    <property type="entry name" value="FIBRILLARIN"/>
</dbReference>
<dbReference type="SMART" id="SM01206">
    <property type="entry name" value="Fibrillarin"/>
    <property type="match status" value="1"/>
</dbReference>
<dbReference type="SUPFAM" id="SSF53335">
    <property type="entry name" value="S-adenosyl-L-methionine-dependent methyltransferases"/>
    <property type="match status" value="1"/>
</dbReference>
<dbReference type="PROSITE" id="PS00566">
    <property type="entry name" value="FIBRILLARIN"/>
    <property type="match status" value="1"/>
</dbReference>
<feature type="chain" id="PRO_0000148532" description="Fibrillarin-like rRNA/tRNA 2'-O-methyltransferase">
    <location>
        <begin position="1"/>
        <end position="227"/>
    </location>
</feature>
<feature type="binding site" evidence="1">
    <location>
        <begin position="82"/>
        <end position="83"/>
    </location>
    <ligand>
        <name>S-adenosyl-L-methionine</name>
        <dbReference type="ChEBI" id="CHEBI:59789"/>
    </ligand>
</feature>
<feature type="binding site" evidence="1">
    <location>
        <begin position="100"/>
        <end position="101"/>
    </location>
    <ligand>
        <name>S-adenosyl-L-methionine</name>
        <dbReference type="ChEBI" id="CHEBI:59789"/>
    </ligand>
</feature>
<feature type="binding site" evidence="1">
    <location>
        <begin position="125"/>
        <end position="126"/>
    </location>
    <ligand>
        <name>S-adenosyl-L-methionine</name>
        <dbReference type="ChEBI" id="CHEBI:59789"/>
    </ligand>
</feature>
<feature type="binding site" evidence="1">
    <location>
        <begin position="145"/>
        <end position="148"/>
    </location>
    <ligand>
        <name>S-adenosyl-L-methionine</name>
        <dbReference type="ChEBI" id="CHEBI:59789"/>
    </ligand>
</feature>
<sequence>MPDIKLLSEGIFEIMKDKRQLATLNLDPGKVVYGEKLISVEGAEYRTWDPRRSKLGAMVLKKFNIPLSKDSKVLYLGAASGTTVSHVSDIASEGAVYSVEFASRSMRDFIRLASRRKNIFPILADAGKPDSYAHIVEPVDLIFQDVAQPNQAEIAARNAARFLNKNGYLLLSIKARSIDTAASPKEIFKEEVKKLEQAFEPGFEILTARDLMPYHEDHLGVLAKLKE</sequence>
<name>FLPA_METAC</name>
<gene>
    <name evidence="1" type="primary">flpA</name>
    <name type="synonym">fibM</name>
    <name type="ordered locus">MA_0341</name>
</gene>
<proteinExistence type="inferred from homology"/>
<reference key="1">
    <citation type="journal article" date="2002" name="Genome Res.">
        <title>The genome of Methanosarcina acetivorans reveals extensive metabolic and physiological diversity.</title>
        <authorList>
            <person name="Galagan J.E."/>
            <person name="Nusbaum C."/>
            <person name="Roy A."/>
            <person name="Endrizzi M.G."/>
            <person name="Macdonald P."/>
            <person name="FitzHugh W."/>
            <person name="Calvo S."/>
            <person name="Engels R."/>
            <person name="Smirnov S."/>
            <person name="Atnoor D."/>
            <person name="Brown A."/>
            <person name="Allen N."/>
            <person name="Naylor J."/>
            <person name="Stange-Thomann N."/>
            <person name="DeArellano K."/>
            <person name="Johnson R."/>
            <person name="Linton L."/>
            <person name="McEwan P."/>
            <person name="McKernan K."/>
            <person name="Talamas J."/>
            <person name="Tirrell A."/>
            <person name="Ye W."/>
            <person name="Zimmer A."/>
            <person name="Barber R.D."/>
            <person name="Cann I."/>
            <person name="Graham D.E."/>
            <person name="Grahame D.A."/>
            <person name="Guss A.M."/>
            <person name="Hedderich R."/>
            <person name="Ingram-Smith C."/>
            <person name="Kuettner H.C."/>
            <person name="Krzycki J.A."/>
            <person name="Leigh J.A."/>
            <person name="Li W."/>
            <person name="Liu J."/>
            <person name="Mukhopadhyay B."/>
            <person name="Reeve J.N."/>
            <person name="Smith K."/>
            <person name="Springer T.A."/>
            <person name="Umayam L.A."/>
            <person name="White O."/>
            <person name="White R.H."/>
            <person name="de Macario E.C."/>
            <person name="Ferry J.G."/>
            <person name="Jarrell K.F."/>
            <person name="Jing H."/>
            <person name="Macario A.J.L."/>
            <person name="Paulsen I.T."/>
            <person name="Pritchett M."/>
            <person name="Sowers K.R."/>
            <person name="Swanson R.V."/>
            <person name="Zinder S.H."/>
            <person name="Lander E."/>
            <person name="Metcalf W.W."/>
            <person name="Birren B."/>
        </authorList>
    </citation>
    <scope>NUCLEOTIDE SEQUENCE [LARGE SCALE GENOMIC DNA]</scope>
    <source>
        <strain>ATCC 35395 / DSM 2834 / JCM 12185 / C2A</strain>
    </source>
</reference>